<organism>
    <name type="scientific">Streptococcus pyogenes serotype M18 (strain MGAS8232)</name>
    <dbReference type="NCBI Taxonomy" id="186103"/>
    <lineage>
        <taxon>Bacteria</taxon>
        <taxon>Bacillati</taxon>
        <taxon>Bacillota</taxon>
        <taxon>Bacilli</taxon>
        <taxon>Lactobacillales</taxon>
        <taxon>Streptococcaceae</taxon>
        <taxon>Streptococcus</taxon>
    </lineage>
</organism>
<accession>P59820</accession>
<accession>Q99YF7</accession>
<reference key="1">
    <citation type="journal article" date="2002" name="Proc. Natl. Acad. Sci. U.S.A.">
        <title>Genome sequence and comparative microarray analysis of serotype M18 group A Streptococcus strains associated with acute rheumatic fever outbreaks.</title>
        <authorList>
            <person name="Smoot J.C."/>
            <person name="Barbian K.D."/>
            <person name="Van Gompel J.J."/>
            <person name="Smoot L.M."/>
            <person name="Chaussee M.S."/>
            <person name="Sylva G.L."/>
            <person name="Sturdevant D.E."/>
            <person name="Ricklefs S.M."/>
            <person name="Porcella S.F."/>
            <person name="Parkins L.D."/>
            <person name="Beres S.B."/>
            <person name="Campbell D.S."/>
            <person name="Smith T.M."/>
            <person name="Zhang Q."/>
            <person name="Kapur V."/>
            <person name="Daly J.A."/>
            <person name="Veasy L.G."/>
            <person name="Musser J.M."/>
        </authorList>
    </citation>
    <scope>NUCLEOTIDE SEQUENCE [LARGE SCALE GENOMIC DNA]</scope>
    <source>
        <strain>MGAS8232</strain>
    </source>
</reference>
<name>RIMP_STRP8</name>
<gene>
    <name evidence="1" type="primary">rimP</name>
    <name type="ordered locus">spyM18_1733</name>
</gene>
<evidence type="ECO:0000255" key="1">
    <source>
        <dbReference type="HAMAP-Rule" id="MF_01077"/>
    </source>
</evidence>
<evidence type="ECO:0000305" key="2"/>
<keyword id="KW-0963">Cytoplasm</keyword>
<keyword id="KW-0690">Ribosome biogenesis</keyword>
<comment type="function">
    <text evidence="1">Required for maturation of 30S ribosomal subunits.</text>
</comment>
<comment type="subcellular location">
    <subcellularLocation>
        <location evidence="1">Cytoplasm</location>
    </subcellularLocation>
</comment>
<comment type="similarity">
    <text evidence="1">Belongs to the RimP family.</text>
</comment>
<comment type="sequence caution" evidence="2">
    <conflict type="erroneous initiation">
        <sequence resource="EMBL-CDS" id="AAL98262"/>
    </conflict>
</comment>
<protein>
    <recommendedName>
        <fullName evidence="1">Ribosome maturation factor RimP</fullName>
    </recommendedName>
</protein>
<feature type="chain" id="PRO_0000181939" description="Ribosome maturation factor RimP">
    <location>
        <begin position="1"/>
        <end position="178"/>
    </location>
</feature>
<proteinExistence type="inferred from homology"/>
<sequence>MDSQEPIILEKSIKIEEVIKIANTSIIDIVTKTVTPEIKAPYELVDVEYDKMGSDYILSILVDKEGGITVEDTSDLTNIISPLLDTIDPDPFPNQYMLEVSSPGLERPLKTADSLKAAVGSYINVSLYQAIDKVKVFQGDLLAFDGETLTIDYLDKTRHKIVNIPYQAVAKVRMAVKL</sequence>
<dbReference type="EMBL" id="AE009949">
    <property type="protein sequence ID" value="AAL98262.1"/>
    <property type="status" value="ALT_INIT"/>
    <property type="molecule type" value="Genomic_DNA"/>
</dbReference>
<dbReference type="SMR" id="P59820"/>
<dbReference type="KEGG" id="spm:spyM18_1733"/>
<dbReference type="HOGENOM" id="CLU_070525_2_0_9"/>
<dbReference type="GO" id="GO:0005829">
    <property type="term" value="C:cytosol"/>
    <property type="evidence" value="ECO:0007669"/>
    <property type="project" value="TreeGrafter"/>
</dbReference>
<dbReference type="GO" id="GO:0000028">
    <property type="term" value="P:ribosomal small subunit assembly"/>
    <property type="evidence" value="ECO:0007669"/>
    <property type="project" value="TreeGrafter"/>
</dbReference>
<dbReference type="GO" id="GO:0006412">
    <property type="term" value="P:translation"/>
    <property type="evidence" value="ECO:0007669"/>
    <property type="project" value="TreeGrafter"/>
</dbReference>
<dbReference type="CDD" id="cd01734">
    <property type="entry name" value="YlxS_C"/>
    <property type="match status" value="1"/>
</dbReference>
<dbReference type="Gene3D" id="2.30.30.180">
    <property type="entry name" value="Ribosome maturation factor RimP, C-terminal domain"/>
    <property type="match status" value="1"/>
</dbReference>
<dbReference type="Gene3D" id="3.30.300.70">
    <property type="entry name" value="RimP-like superfamily, N-terminal"/>
    <property type="match status" value="1"/>
</dbReference>
<dbReference type="HAMAP" id="MF_01077">
    <property type="entry name" value="RimP"/>
    <property type="match status" value="1"/>
</dbReference>
<dbReference type="InterPro" id="IPR003728">
    <property type="entry name" value="Ribosome_maturation_RimP"/>
</dbReference>
<dbReference type="InterPro" id="IPR028998">
    <property type="entry name" value="RimP_C"/>
</dbReference>
<dbReference type="InterPro" id="IPR036847">
    <property type="entry name" value="RimP_C_sf"/>
</dbReference>
<dbReference type="InterPro" id="IPR028989">
    <property type="entry name" value="RimP_N"/>
</dbReference>
<dbReference type="InterPro" id="IPR035956">
    <property type="entry name" value="RimP_N_sf"/>
</dbReference>
<dbReference type="NCBIfam" id="NF000928">
    <property type="entry name" value="PRK00092.1-2"/>
    <property type="match status" value="1"/>
</dbReference>
<dbReference type="PANTHER" id="PTHR33867">
    <property type="entry name" value="RIBOSOME MATURATION FACTOR RIMP"/>
    <property type="match status" value="1"/>
</dbReference>
<dbReference type="PANTHER" id="PTHR33867:SF1">
    <property type="entry name" value="RIBOSOME MATURATION FACTOR RIMP"/>
    <property type="match status" value="1"/>
</dbReference>
<dbReference type="Pfam" id="PF17384">
    <property type="entry name" value="DUF150_C"/>
    <property type="match status" value="1"/>
</dbReference>
<dbReference type="Pfam" id="PF02576">
    <property type="entry name" value="RimP_N"/>
    <property type="match status" value="1"/>
</dbReference>
<dbReference type="SUPFAM" id="SSF74942">
    <property type="entry name" value="YhbC-like, C-terminal domain"/>
    <property type="match status" value="1"/>
</dbReference>
<dbReference type="SUPFAM" id="SSF75420">
    <property type="entry name" value="YhbC-like, N-terminal domain"/>
    <property type="match status" value="1"/>
</dbReference>